<comment type="function">
    <text evidence="1">Responsible for synthesis of pseudouridine from uracil-55 in the psi GC loop of transfer RNAs.</text>
</comment>
<comment type="catalytic activity">
    <reaction evidence="1">
        <text>uridine(55) in tRNA = pseudouridine(55) in tRNA</text>
        <dbReference type="Rhea" id="RHEA:42532"/>
        <dbReference type="Rhea" id="RHEA-COMP:10101"/>
        <dbReference type="Rhea" id="RHEA-COMP:10102"/>
        <dbReference type="ChEBI" id="CHEBI:65314"/>
        <dbReference type="ChEBI" id="CHEBI:65315"/>
        <dbReference type="EC" id="5.4.99.25"/>
    </reaction>
</comment>
<comment type="similarity">
    <text evidence="1">Belongs to the pseudouridine synthase TruB family. Type 1 subfamily.</text>
</comment>
<sequence>MARRPKGRFIDGIVLLDKSTGMSSNFALQRVKRFFNANKAGHTGALDPLATGMLPVCLGEATKFSQHLLDADKRYLVTAKLGERTDTSDSDGEVVQTRPVTFTEAQLLSALEHFRGDTQQVPSMYSALKYQGQPLYKYAREGIEVPRESRPITVFELNFISLEGDELTLDIHCSKGTYIRTIIDDLGEMLGCGAHVIMLRRTQVAQYPYAKMVTLEQLEALVTQAHEQQIDPSVLLDPLLLPMDTAVADFPEVNVPEASAAYLMQGQAVRVTGLKADTLVRITLGDAHRFVGIGAMNDDGLLAPKRLIVIHDEPIVTD</sequence>
<reference key="1">
    <citation type="submission" date="2007-04" db="EMBL/GenBank/DDBJ databases">
        <title>Complete sequence of Shewanella putrefaciens CN-32.</title>
        <authorList>
            <consortium name="US DOE Joint Genome Institute"/>
            <person name="Copeland A."/>
            <person name="Lucas S."/>
            <person name="Lapidus A."/>
            <person name="Barry K."/>
            <person name="Detter J.C."/>
            <person name="Glavina del Rio T."/>
            <person name="Hammon N."/>
            <person name="Israni S."/>
            <person name="Dalin E."/>
            <person name="Tice H."/>
            <person name="Pitluck S."/>
            <person name="Chain P."/>
            <person name="Malfatti S."/>
            <person name="Shin M."/>
            <person name="Vergez L."/>
            <person name="Schmutz J."/>
            <person name="Larimer F."/>
            <person name="Land M."/>
            <person name="Hauser L."/>
            <person name="Kyrpides N."/>
            <person name="Mikhailova N."/>
            <person name="Romine M.F."/>
            <person name="Fredrickson J."/>
            <person name="Tiedje J."/>
            <person name="Richardson P."/>
        </authorList>
    </citation>
    <scope>NUCLEOTIDE SEQUENCE [LARGE SCALE GENOMIC DNA]</scope>
    <source>
        <strain>CN-32 / ATCC BAA-453</strain>
    </source>
</reference>
<evidence type="ECO:0000255" key="1">
    <source>
        <dbReference type="HAMAP-Rule" id="MF_01080"/>
    </source>
</evidence>
<proteinExistence type="inferred from homology"/>
<feature type="chain" id="PRO_1000084678" description="tRNA pseudouridine synthase B">
    <location>
        <begin position="1"/>
        <end position="318"/>
    </location>
</feature>
<feature type="active site" description="Nucleophile" evidence="1">
    <location>
        <position position="47"/>
    </location>
</feature>
<organism>
    <name type="scientific">Shewanella putrefaciens (strain CN-32 / ATCC BAA-453)</name>
    <dbReference type="NCBI Taxonomy" id="319224"/>
    <lineage>
        <taxon>Bacteria</taxon>
        <taxon>Pseudomonadati</taxon>
        <taxon>Pseudomonadota</taxon>
        <taxon>Gammaproteobacteria</taxon>
        <taxon>Alteromonadales</taxon>
        <taxon>Shewanellaceae</taxon>
        <taxon>Shewanella</taxon>
    </lineage>
</organism>
<dbReference type="EC" id="5.4.99.25" evidence="1"/>
<dbReference type="EMBL" id="CP000681">
    <property type="protein sequence ID" value="ABP76551.1"/>
    <property type="molecule type" value="Genomic_DNA"/>
</dbReference>
<dbReference type="SMR" id="A4Y9B8"/>
<dbReference type="STRING" id="319224.Sputcn32_2832"/>
<dbReference type="KEGG" id="spc:Sputcn32_2832"/>
<dbReference type="eggNOG" id="COG0130">
    <property type="taxonomic scope" value="Bacteria"/>
</dbReference>
<dbReference type="HOGENOM" id="CLU_032087_0_3_6"/>
<dbReference type="GO" id="GO:0003723">
    <property type="term" value="F:RNA binding"/>
    <property type="evidence" value="ECO:0007669"/>
    <property type="project" value="InterPro"/>
</dbReference>
<dbReference type="GO" id="GO:0160148">
    <property type="term" value="F:tRNA pseudouridine(55) synthase activity"/>
    <property type="evidence" value="ECO:0007669"/>
    <property type="project" value="UniProtKB-EC"/>
</dbReference>
<dbReference type="GO" id="GO:1990481">
    <property type="term" value="P:mRNA pseudouridine synthesis"/>
    <property type="evidence" value="ECO:0007669"/>
    <property type="project" value="TreeGrafter"/>
</dbReference>
<dbReference type="GO" id="GO:0031119">
    <property type="term" value="P:tRNA pseudouridine synthesis"/>
    <property type="evidence" value="ECO:0007669"/>
    <property type="project" value="UniProtKB-UniRule"/>
</dbReference>
<dbReference type="CDD" id="cd02573">
    <property type="entry name" value="PseudoU_synth_EcTruB"/>
    <property type="match status" value="1"/>
</dbReference>
<dbReference type="CDD" id="cd21152">
    <property type="entry name" value="PUA_TruB_bacterial"/>
    <property type="match status" value="1"/>
</dbReference>
<dbReference type="FunFam" id="2.30.130.10:FF:000004">
    <property type="entry name" value="tRNA pseudouridine synthase B"/>
    <property type="match status" value="1"/>
</dbReference>
<dbReference type="FunFam" id="3.30.2350.10:FF:000003">
    <property type="entry name" value="tRNA pseudouridine synthase B"/>
    <property type="match status" value="1"/>
</dbReference>
<dbReference type="Gene3D" id="3.30.2350.10">
    <property type="entry name" value="Pseudouridine synthase"/>
    <property type="match status" value="1"/>
</dbReference>
<dbReference type="Gene3D" id="2.30.130.10">
    <property type="entry name" value="PUA domain"/>
    <property type="match status" value="1"/>
</dbReference>
<dbReference type="HAMAP" id="MF_01080">
    <property type="entry name" value="TruB_bact"/>
    <property type="match status" value="1"/>
</dbReference>
<dbReference type="InterPro" id="IPR020103">
    <property type="entry name" value="PsdUridine_synth_cat_dom_sf"/>
</dbReference>
<dbReference type="InterPro" id="IPR002501">
    <property type="entry name" value="PsdUridine_synth_N"/>
</dbReference>
<dbReference type="InterPro" id="IPR015947">
    <property type="entry name" value="PUA-like_sf"/>
</dbReference>
<dbReference type="InterPro" id="IPR036974">
    <property type="entry name" value="PUA_sf"/>
</dbReference>
<dbReference type="InterPro" id="IPR014780">
    <property type="entry name" value="tRNA_psdUridine_synth_TruB"/>
</dbReference>
<dbReference type="InterPro" id="IPR015240">
    <property type="entry name" value="tRNA_sdUridine_synth_fam1_C"/>
</dbReference>
<dbReference type="InterPro" id="IPR032819">
    <property type="entry name" value="TruB_C"/>
</dbReference>
<dbReference type="NCBIfam" id="TIGR00431">
    <property type="entry name" value="TruB"/>
    <property type="match status" value="1"/>
</dbReference>
<dbReference type="PANTHER" id="PTHR13767:SF2">
    <property type="entry name" value="PSEUDOURIDYLATE SYNTHASE TRUB1"/>
    <property type="match status" value="1"/>
</dbReference>
<dbReference type="PANTHER" id="PTHR13767">
    <property type="entry name" value="TRNA-PSEUDOURIDINE SYNTHASE"/>
    <property type="match status" value="1"/>
</dbReference>
<dbReference type="Pfam" id="PF09157">
    <property type="entry name" value="TruB-C_2"/>
    <property type="match status" value="1"/>
</dbReference>
<dbReference type="Pfam" id="PF16198">
    <property type="entry name" value="TruB_C_2"/>
    <property type="match status" value="1"/>
</dbReference>
<dbReference type="Pfam" id="PF01509">
    <property type="entry name" value="TruB_N"/>
    <property type="match status" value="1"/>
</dbReference>
<dbReference type="SUPFAM" id="SSF55120">
    <property type="entry name" value="Pseudouridine synthase"/>
    <property type="match status" value="1"/>
</dbReference>
<dbReference type="SUPFAM" id="SSF88697">
    <property type="entry name" value="PUA domain-like"/>
    <property type="match status" value="1"/>
</dbReference>
<name>TRUB_SHEPC</name>
<gene>
    <name evidence="1" type="primary">truB</name>
    <name type="ordered locus">Sputcn32_2832</name>
</gene>
<accession>A4Y9B8</accession>
<protein>
    <recommendedName>
        <fullName evidence="1">tRNA pseudouridine synthase B</fullName>
        <ecNumber evidence="1">5.4.99.25</ecNumber>
    </recommendedName>
    <alternativeName>
        <fullName evidence="1">tRNA pseudouridine(55) synthase</fullName>
        <shortName evidence="1">Psi55 synthase</shortName>
    </alternativeName>
    <alternativeName>
        <fullName evidence="1">tRNA pseudouridylate synthase</fullName>
    </alternativeName>
    <alternativeName>
        <fullName evidence="1">tRNA-uridine isomerase</fullName>
    </alternativeName>
</protein>
<keyword id="KW-0413">Isomerase</keyword>
<keyword id="KW-0819">tRNA processing</keyword>